<name>CSAG2_HUMAN</name>
<keyword id="KW-0025">Alternative splicing</keyword>
<keyword id="KW-1185">Reference proteome</keyword>
<comment type="function">
    <text>Drug-resistance related protein, its expression is associated with the chemotherapy resistant and neoplastic phenotype. May also be linked to the malignant phenotype.</text>
</comment>
<comment type="interaction">
    <interactant intactId="EBI-26354757">
        <id>Q9Y5P2</id>
    </interactant>
    <interactant intactId="EBI-1802965">
        <id>Q96EB6</id>
        <label>SIRT1</label>
    </interactant>
    <organismsDiffer>false</organismsDiffer>
    <experiments>8</experiments>
</comment>
<comment type="alternative products">
    <event type="alternative splicing"/>
    <isoform>
        <id>Q9Y5P2-1</id>
        <name>1</name>
        <name>Long</name>
        <name>TRAG-3L</name>
        <sequence type="displayed"/>
    </isoform>
    <isoform>
        <id>Q9Y5P2-2</id>
        <name>2</name>
        <name>Short</name>
        <name>TRAG-3S</name>
        <sequence type="described" ref="VSP_004469"/>
    </isoform>
    <isoform>
        <id>Q9Y5P2-3</id>
        <name>3</name>
        <sequence type="described" ref="VSP_034912 VSP_034913"/>
    </isoform>
</comment>
<comment type="tissue specificity">
    <text>Weakly expressed in kidney. Expressed in various tumor cell lines including carcinomas, myeloid and lymphoid malignancies, melanomas and prostate cancer. Overexpressed in taxol-resistant breast cancer line MDA 435TR and the doxorubicin-resistant multiple myelanoma lines RPMI-8226/Dox40 and RPMI-8226/MDR10V.</text>
</comment>
<evidence type="ECO:0000256" key="1">
    <source>
        <dbReference type="SAM" id="MobiDB-lite"/>
    </source>
</evidence>
<evidence type="ECO:0000303" key="2">
    <source>
    </source>
</evidence>
<evidence type="ECO:0000303" key="3">
    <source ref="2"/>
</evidence>
<evidence type="ECO:0000305" key="4"/>
<organism>
    <name type="scientific">Homo sapiens</name>
    <name type="common">Human</name>
    <dbReference type="NCBI Taxonomy" id="9606"/>
    <lineage>
        <taxon>Eukaryota</taxon>
        <taxon>Metazoa</taxon>
        <taxon>Chordata</taxon>
        <taxon>Craniata</taxon>
        <taxon>Vertebrata</taxon>
        <taxon>Euteleostomi</taxon>
        <taxon>Mammalia</taxon>
        <taxon>Eutheria</taxon>
        <taxon>Euarchontoglires</taxon>
        <taxon>Primates</taxon>
        <taxon>Haplorrhini</taxon>
        <taxon>Catarrhini</taxon>
        <taxon>Hominidae</taxon>
        <taxon>Homo</taxon>
    </lineage>
</organism>
<accession>Q9Y5P2</accession>
<accession>O75605</accession>
<accession>Q0VDC3</accession>
<accession>Q96IU8</accession>
<proteinExistence type="evidence at protein level"/>
<sequence>MWMGLIQLVEGVKRKDQGFLEKEFYHKTNIKMRCEFLACWPAFTVLGEAWRDQVDWSRLLRDAGLVKMSRKPRASSPLSNNHPPTPKRRGSGRHPLNPGPEALSKFPRQPGREKGPIKEVPGTKGSP</sequence>
<dbReference type="EMBL" id="AF080246">
    <property type="protein sequence ID" value="AAC29487.1"/>
    <property type="molecule type" value="mRNA"/>
</dbReference>
<dbReference type="EMBL" id="AF136715">
    <property type="protein sequence ID" value="AAD37859.1"/>
    <property type="molecule type" value="mRNA"/>
</dbReference>
<dbReference type="EMBL" id="CH471169">
    <property type="protein sequence ID" value="EAW99428.1"/>
    <property type="molecule type" value="Genomic_DNA"/>
</dbReference>
<dbReference type="EMBL" id="BC007228">
    <property type="protein sequence ID" value="AAH07228.1"/>
    <property type="molecule type" value="mRNA"/>
</dbReference>
<dbReference type="EMBL" id="BC119734">
    <property type="protein sequence ID" value="AAI19735.1"/>
    <property type="molecule type" value="mRNA"/>
</dbReference>
<dbReference type="EMBL" id="BC119735">
    <property type="protein sequence ID" value="AAI19736.1"/>
    <property type="molecule type" value="mRNA"/>
</dbReference>
<dbReference type="CCDS" id="CCDS94689.1">
    <molecule id="Q9Y5P2-1"/>
</dbReference>
<dbReference type="RefSeq" id="NP_001123298.1">
    <molecule id="Q9Y5P2-1"/>
    <property type="nucleotide sequence ID" value="NM_001129826.2"/>
</dbReference>
<dbReference type="RefSeq" id="NP_001123300.1">
    <molecule id="Q9Y5P2-2"/>
    <property type="nucleotide sequence ID" value="NM_001129828.2"/>
</dbReference>
<dbReference type="RefSeq" id="XP_054189306.1">
    <molecule id="Q9Y5P2-1"/>
    <property type="nucleotide sequence ID" value="XM_054333331.1"/>
</dbReference>
<dbReference type="RefSeq" id="XP_054189307.1">
    <molecule id="Q9Y5P2-2"/>
    <property type="nucleotide sequence ID" value="XM_054333332.1"/>
</dbReference>
<dbReference type="SMR" id="Q9Y5P2"/>
<dbReference type="BioGRID" id="133321">
    <property type="interactions" value="1"/>
</dbReference>
<dbReference type="FunCoup" id="Q9Y5P2">
    <property type="interactions" value="70"/>
</dbReference>
<dbReference type="IntAct" id="Q9Y5P2">
    <property type="interactions" value="95"/>
</dbReference>
<dbReference type="MINT" id="Q9Y5P2"/>
<dbReference type="STRING" id="9606.ENSP00000492276"/>
<dbReference type="iPTMnet" id="Q9Y5P2"/>
<dbReference type="PhosphoSitePlus" id="Q9Y5P2"/>
<dbReference type="BioMuta" id="CSAG2"/>
<dbReference type="Antibodypedia" id="80508">
    <property type="antibodies" value="5 antibodies from 3 providers"/>
</dbReference>
<dbReference type="DNASU" id="389903"/>
<dbReference type="Ensembl" id="ENST00000599845.3">
    <molecule id="Q9Y5P2-1"/>
    <property type="protein sequence ID" value="ENSP00000491011.1"/>
    <property type="gene ID" value="ENSG00000268916.6"/>
</dbReference>
<dbReference type="Ensembl" id="ENST00000638835.1">
    <molecule id="Q9Y5P2-2"/>
    <property type="protein sequence ID" value="ENSP00000492276.1"/>
    <property type="gene ID" value="ENSG00000268916.6"/>
</dbReference>
<dbReference type="GeneID" id="102723547"/>
<dbReference type="GeneID" id="389903"/>
<dbReference type="KEGG" id="hsa:389903"/>
<dbReference type="MANE-Select" id="ENST00000599845.3">
    <property type="protein sequence ID" value="ENSP00000491011.1"/>
    <property type="RefSeq nucleotide sequence ID" value="NM_001129826.3"/>
    <property type="RefSeq protein sequence ID" value="NP_001123298.1"/>
</dbReference>
<dbReference type="AGR" id="HGNC:16847"/>
<dbReference type="AGR" id="HGNC:26237"/>
<dbReference type="CTD" id="389903"/>
<dbReference type="DisGeNET" id="389903"/>
<dbReference type="GeneCards" id="CSAG2"/>
<dbReference type="GeneCards" id="CSAG3"/>
<dbReference type="HGNC" id="HGNC:16847">
    <property type="gene designation" value="CSAG2"/>
</dbReference>
<dbReference type="HGNC" id="HGNC:26237">
    <property type="gene designation" value="CSAG3"/>
</dbReference>
<dbReference type="HPA" id="ENSG00000268916">
    <property type="expression patterns" value="Tissue enhanced (lymphoid tissue, testis)"/>
</dbReference>
<dbReference type="MIM" id="301096">
    <property type="type" value="gene"/>
</dbReference>
<dbReference type="MIM" id="301097">
    <property type="type" value="gene"/>
</dbReference>
<dbReference type="neXtProt" id="NX_Q9Y5P2"/>
<dbReference type="OpenTargets" id="ENSG00000268916"/>
<dbReference type="PharmGKB" id="PA134919230"/>
<dbReference type="VEuPathDB" id="HostDB:ENSG00000268916"/>
<dbReference type="GeneTree" id="ENSGT00390000012766"/>
<dbReference type="InParanoid" id="Q9Y5P2"/>
<dbReference type="OMA" id="WCEFLAC"/>
<dbReference type="OrthoDB" id="9463122at2759"/>
<dbReference type="PAN-GO" id="Q9Y5P2">
    <property type="GO annotations" value="0 GO annotations based on evolutionary models"/>
</dbReference>
<dbReference type="PhylomeDB" id="Q9Y5P2"/>
<dbReference type="PathwayCommons" id="Q9Y5P2"/>
<dbReference type="SignaLink" id="Q9Y5P2"/>
<dbReference type="SIGNOR" id="Q9Y5P2"/>
<dbReference type="BioGRID-ORCS" id="389903">
    <property type="hits" value="3 hits in 163 CRISPR screens"/>
</dbReference>
<dbReference type="GenomeRNAi" id="389903"/>
<dbReference type="Pharos" id="Q9Y5P2">
    <property type="development level" value="Tdark"/>
</dbReference>
<dbReference type="PRO" id="PR:Q9Y5P2"/>
<dbReference type="Proteomes" id="UP000005640">
    <property type="component" value="Chromosome X"/>
</dbReference>
<dbReference type="RNAct" id="Q9Y5P2">
    <property type="molecule type" value="protein"/>
</dbReference>
<dbReference type="Bgee" id="ENSG00000268916">
    <property type="expression patterns" value="Expressed in male germ line stem cell (sensu Vertebrata) in testis and 72 other cell types or tissues"/>
</dbReference>
<dbReference type="GO" id="GO:0009410">
    <property type="term" value="P:response to xenobiotic stimulus"/>
    <property type="evidence" value="ECO:0000304"/>
    <property type="project" value="ProtInc"/>
</dbReference>
<gene>
    <name type="primary">CSAG2</name>
    <name type="synonym">TRAG3</name>
</gene>
<gene>
    <name type="primary">CSAG3</name>
    <name type="synonym">CSAG3A</name>
</gene>
<feature type="chain" id="PRO_0000079390" description="Chondrosarcoma-associated gene 2/3 protein">
    <location>
        <begin position="1"/>
        <end position="127"/>
    </location>
</feature>
<feature type="region of interest" description="Disordered" evidence="1">
    <location>
        <begin position="68"/>
        <end position="127"/>
    </location>
</feature>
<feature type="splice variant" id="VSP_034912" description="In isoform 3." evidence="2">
    <location>
        <begin position="1"/>
        <end position="67"/>
    </location>
</feature>
<feature type="splice variant" id="VSP_004469" description="In isoform 2." evidence="2 3">
    <location>
        <begin position="89"/>
        <end position="105"/>
    </location>
</feature>
<feature type="splice variant" id="VSP_034913" description="In isoform 3." evidence="2">
    <location>
        <begin position="94"/>
        <end position="105"/>
    </location>
</feature>
<feature type="sequence conflict" description="In Ref. 1; AAC29487 and 2; AAD37859." evidence="4" ref="1 2">
    <original>R</original>
    <variation>H</variation>
    <location>
        <position position="33"/>
    </location>
</feature>
<feature type="sequence conflict" description="In Ref. 1; AAC29487 and 2; AAD37859." evidence="4" ref="1 2">
    <original>L</original>
    <variation>H</variation>
    <location>
        <position position="37"/>
    </location>
</feature>
<feature type="sequence conflict" description="In Ref. 1; AAC29487 and 2; AAD37859." evidence="4" ref="1 2">
    <original>R</original>
    <variation>I</variation>
    <location>
        <position position="58"/>
    </location>
</feature>
<feature type="sequence conflict" description="In Ref. 1; AAC29487 and 2; AAD37859." evidence="4" ref="1 2">
    <original>P</original>
    <variation>L</variation>
    <location>
        <position position="110"/>
    </location>
</feature>
<feature type="sequence conflict" description="In Ref. 1; AAC29487 and 2; AAD37859." evidence="4" ref="1 2">
    <original>K</original>
    <variation>E</variation>
    <location>
        <position position="118"/>
    </location>
</feature>
<protein>
    <recommendedName>
        <fullName>Chondrosarcoma-associated gene 2/3 protein</fullName>
    </recommendedName>
    <alternativeName>
        <fullName>Cancer/testis antigen 24.2</fullName>
        <shortName>CT24.2</shortName>
    </alternativeName>
    <alternativeName>
        <fullName>Taxol-resistant-associated gene 3 protein</fullName>
        <shortName>TRAG-3</shortName>
    </alternativeName>
</protein>
<reference key="1">
    <citation type="journal article" date="1999" name="Gene">
        <title>TRAG-3, a novel gene, isolated from a taxol-resistant ovarian carcinoma cell line.</title>
        <authorList>
            <person name="Duan Z."/>
            <person name="Feller A.J."/>
            <person name="Toh H.C."/>
            <person name="Makastorsis T."/>
            <person name="Seiden M.V."/>
        </authorList>
    </citation>
    <scope>NUCLEOTIDE SEQUENCE [MRNA] (ISOFORM 1)</scope>
    <source>
        <tissue>Ovary</tissue>
    </source>
</reference>
<reference key="2">
    <citation type="submission" date="1999-03" db="EMBL/GenBank/DDBJ databases">
        <title>Identification a novel TRAG-3 variant gene, TRAG-3L, from a taxol-resistant ovarian cancer cell line SKOV-3.</title>
        <authorList>
            <person name="Duan Z."/>
            <person name="Aynn F."/>
            <person name="Toh H.C."/>
            <person name="Seiden M.V."/>
        </authorList>
    </citation>
    <scope>NUCLEOTIDE SEQUENCE [MRNA] (ISOFORM 2)</scope>
    <source>
        <tissue>Ovary</tissue>
    </source>
</reference>
<reference key="3">
    <citation type="submission" date="2005-07" db="EMBL/GenBank/DDBJ databases">
        <authorList>
            <person name="Mural R.J."/>
            <person name="Istrail S."/>
            <person name="Sutton G.G."/>
            <person name="Florea L."/>
            <person name="Halpern A.L."/>
            <person name="Mobarry C.M."/>
            <person name="Lippert R."/>
            <person name="Walenz B."/>
            <person name="Shatkay H."/>
            <person name="Dew I."/>
            <person name="Miller J.R."/>
            <person name="Flanigan M.J."/>
            <person name="Edwards N.J."/>
            <person name="Bolanos R."/>
            <person name="Fasulo D."/>
            <person name="Halldorsson B.V."/>
            <person name="Hannenhalli S."/>
            <person name="Turner R."/>
            <person name="Yooseph S."/>
            <person name="Lu F."/>
            <person name="Nusskern D.R."/>
            <person name="Shue B.C."/>
            <person name="Zheng X.H."/>
            <person name="Zhong F."/>
            <person name="Delcher A.L."/>
            <person name="Huson D.H."/>
            <person name="Kravitz S.A."/>
            <person name="Mouchard L."/>
            <person name="Reinert K."/>
            <person name="Remington K.A."/>
            <person name="Clark A.G."/>
            <person name="Waterman M.S."/>
            <person name="Eichler E.E."/>
            <person name="Adams M.D."/>
            <person name="Hunkapiller M.W."/>
            <person name="Myers E.W."/>
            <person name="Venter J.C."/>
        </authorList>
    </citation>
    <scope>NUCLEOTIDE SEQUENCE [LARGE SCALE GENOMIC DNA]</scope>
</reference>
<reference key="4">
    <citation type="journal article" date="2004" name="Genome Res.">
        <title>The status, quality, and expansion of the NIH full-length cDNA project: the Mammalian Gene Collection (MGC).</title>
        <authorList>
            <consortium name="The MGC Project Team"/>
        </authorList>
    </citation>
    <scope>NUCLEOTIDE SEQUENCE [LARGE SCALE MRNA] (ISOFORMS 2 AND 3)</scope>
    <source>
        <tissue>Lung</tissue>
    </source>
</reference>